<proteinExistence type="evidence at protein level"/>
<organism>
    <name type="scientific">Homo sapiens</name>
    <name type="common">Human</name>
    <dbReference type="NCBI Taxonomy" id="9606"/>
    <lineage>
        <taxon>Eukaryota</taxon>
        <taxon>Metazoa</taxon>
        <taxon>Chordata</taxon>
        <taxon>Craniata</taxon>
        <taxon>Vertebrata</taxon>
        <taxon>Euteleostomi</taxon>
        <taxon>Mammalia</taxon>
        <taxon>Eutheria</taxon>
        <taxon>Euarchontoglires</taxon>
        <taxon>Primates</taxon>
        <taxon>Haplorrhini</taxon>
        <taxon>Catarrhini</taxon>
        <taxon>Hominidae</taxon>
        <taxon>Homo</taxon>
    </lineage>
</organism>
<protein>
    <recommendedName>
        <fullName evidence="5">Achaete-scute homolog 3</fullName>
        <shortName>ASH-3</shortName>
        <shortName>hASH3</shortName>
    </recommendedName>
    <alternativeName>
        <fullName>Class A basic helix-loop-helix protein 42</fullName>
        <shortName>bHLHa42</shortName>
    </alternativeName>
    <alternativeName>
        <fullName>bHLH transcriptional regulator Sgn-1</fullName>
    </alternativeName>
</protein>
<sequence>MMDNRGNSSLPDKLPIFPDSARLPLTRSFYLEPMVTFHVHPEAPVSSPYSEELPRLPFPSDSLILGNYSEPCPFSFPMPYPNYRGCEYSYGPAFTRKRNERERQRVKCVNEGYAQLRHHLPEEYLEKRLSKVETLRAAIKYINYLQSLLYPDKAETKNNPGKVSSMIATTSHHADPMFRIV</sequence>
<accession>Q9NQ33</accession>
<accession>Q8WYQ6</accession>
<reference key="1">
    <citation type="journal article" date="2001" name="Cytogenet. Cell Genet.">
        <title>Comparative genomic sequencing reveals a strikingly similar architecture of a conserved syntenic region on human chromosome 11p15.3 (including gene ST5) and mouse chromosome 7.</title>
        <authorList>
            <person name="Amid C."/>
            <person name="Bahr A."/>
            <person name="Mujica A."/>
            <person name="Sampson N."/>
            <person name="Bikar S.E."/>
            <person name="Winterpacht A."/>
            <person name="Zabel B."/>
            <person name="Hankeln T."/>
            <person name="Schmidt E.R."/>
        </authorList>
    </citation>
    <scope>NUCLEOTIDE SEQUENCE [GENOMIC DNA]</scope>
</reference>
<reference key="2">
    <citation type="journal article" date="2001" name="Dev. Biol.">
        <title>Sgn1, a basic helix-loop-helix transcription factor delineates the salivary gland duct cell lineage in mice.</title>
        <authorList>
            <person name="Yoshida S."/>
            <person name="Ohbo K."/>
            <person name="Takakura A."/>
            <person name="Takebayashi H."/>
            <person name="Okada T."/>
            <person name="Abe K."/>
            <person name="Nabeshima Y."/>
        </authorList>
    </citation>
    <scope>NUCLEOTIDE SEQUENCE [GENOMIC DNA] OF 2-181</scope>
    <scope>VARIANT LEU-55</scope>
</reference>
<reference key="3">
    <citation type="journal article" date="2004" name="Genomics">
        <title>Hash4, a novel human achaete-scute homologue found in fetal skin.</title>
        <authorList>
            <person name="Jonsson M."/>
            <person name="Bjoerntorp Mark E."/>
            <person name="Brantsing C."/>
            <person name="Brandner J.M."/>
            <person name="Lindahl A."/>
            <person name="Asp J."/>
        </authorList>
    </citation>
    <scope>TISSUE SPECIFICITY</scope>
</reference>
<gene>
    <name evidence="6" type="primary">ASCL3</name>
    <name type="synonym">BHLHA42</name>
    <name type="synonym">HASH3</name>
    <name type="synonym">SGN1</name>
</gene>
<evidence type="ECO:0000250" key="1">
    <source>
        <dbReference type="UniProtKB" id="Q9JJR7"/>
    </source>
</evidence>
<evidence type="ECO:0000255" key="2">
    <source>
        <dbReference type="PROSITE-ProRule" id="PRU00981"/>
    </source>
</evidence>
<evidence type="ECO:0000269" key="3">
    <source>
    </source>
</evidence>
<evidence type="ECO:0000269" key="4">
    <source>
    </source>
</evidence>
<evidence type="ECO:0000305" key="5"/>
<evidence type="ECO:0000312" key="6">
    <source>
        <dbReference type="HGNC" id="HGNC:740"/>
    </source>
</evidence>
<keyword id="KW-0238">DNA-binding</keyword>
<keyword id="KW-0539">Nucleus</keyword>
<keyword id="KW-1185">Reference proteome</keyword>
<keyword id="KW-0678">Repressor</keyword>
<keyword id="KW-0804">Transcription</keyword>
<keyword id="KW-0805">Transcription regulation</keyword>
<feature type="chain" id="PRO_0000127133" description="Achaete-scute homolog 3">
    <location>
        <begin position="1"/>
        <end position="181"/>
    </location>
</feature>
<feature type="domain" description="bHLH" evidence="2">
    <location>
        <begin position="93"/>
        <end position="145"/>
    </location>
</feature>
<feature type="region of interest" description="Basic motif" evidence="2">
    <location>
        <begin position="93"/>
        <end position="106"/>
    </location>
</feature>
<feature type="region of interest" description="Helix-loop-helix motif" evidence="2">
    <location>
        <begin position="107"/>
        <end position="145"/>
    </location>
</feature>
<feature type="sequence variant" id="VAR_055948" description="In dbSNP:rs4909951." evidence="3">
    <original>R</original>
    <variation>L</variation>
    <location>
        <position position="55"/>
    </location>
</feature>
<dbReference type="EMBL" id="AJ400877">
    <property type="protein sequence ID" value="CAB92288.1"/>
    <property type="molecule type" value="Genomic_DNA"/>
</dbReference>
<dbReference type="EMBL" id="AB046450">
    <property type="protein sequence ID" value="BAB83913.1"/>
    <property type="molecule type" value="Genomic_DNA"/>
</dbReference>
<dbReference type="CCDS" id="CCDS7795.1"/>
<dbReference type="RefSeq" id="NP_065697.1">
    <property type="nucleotide sequence ID" value="NM_020646.3"/>
</dbReference>
<dbReference type="SMR" id="Q9NQ33"/>
<dbReference type="BioGRID" id="121184">
    <property type="interactions" value="39"/>
</dbReference>
<dbReference type="FunCoup" id="Q9NQ33">
    <property type="interactions" value="187"/>
</dbReference>
<dbReference type="IntAct" id="Q9NQ33">
    <property type="interactions" value="8"/>
</dbReference>
<dbReference type="STRING" id="9606.ENSP00000435770"/>
<dbReference type="iPTMnet" id="Q9NQ33"/>
<dbReference type="PhosphoSitePlus" id="Q9NQ33"/>
<dbReference type="BioMuta" id="ASCL3"/>
<dbReference type="DMDM" id="20454833"/>
<dbReference type="MassIVE" id="Q9NQ33"/>
<dbReference type="PaxDb" id="9606-ENSP00000435770"/>
<dbReference type="Antibodypedia" id="24178">
    <property type="antibodies" value="89 antibodies from 23 providers"/>
</dbReference>
<dbReference type="DNASU" id="56676"/>
<dbReference type="Ensembl" id="ENST00000531618.2">
    <property type="protein sequence ID" value="ENSP00000435770.1"/>
    <property type="gene ID" value="ENSG00000176009.4"/>
</dbReference>
<dbReference type="GeneID" id="56676"/>
<dbReference type="KEGG" id="hsa:56676"/>
<dbReference type="MANE-Select" id="ENST00000531618.2">
    <property type="protein sequence ID" value="ENSP00000435770.1"/>
    <property type="RefSeq nucleotide sequence ID" value="NM_020646.3"/>
    <property type="RefSeq protein sequence ID" value="NP_065697.1"/>
</dbReference>
<dbReference type="UCSC" id="uc057yvn.1">
    <property type="organism name" value="human"/>
</dbReference>
<dbReference type="AGR" id="HGNC:740"/>
<dbReference type="CTD" id="56676"/>
<dbReference type="GeneCards" id="ASCL3"/>
<dbReference type="HGNC" id="HGNC:740">
    <property type="gene designation" value="ASCL3"/>
</dbReference>
<dbReference type="HPA" id="ENSG00000176009">
    <property type="expression patterns" value="Tissue enriched (salivary)"/>
</dbReference>
<dbReference type="MIM" id="609154">
    <property type="type" value="gene"/>
</dbReference>
<dbReference type="neXtProt" id="NX_Q9NQ33"/>
<dbReference type="OpenTargets" id="ENSG00000176009"/>
<dbReference type="PharmGKB" id="PA25040"/>
<dbReference type="VEuPathDB" id="HostDB:ENSG00000176009"/>
<dbReference type="eggNOG" id="KOG4029">
    <property type="taxonomic scope" value="Eukaryota"/>
</dbReference>
<dbReference type="GeneTree" id="ENSGT00940000162850"/>
<dbReference type="HOGENOM" id="CLU_128274_0_0_1"/>
<dbReference type="InParanoid" id="Q9NQ33"/>
<dbReference type="OMA" id="MMDNRSY"/>
<dbReference type="OrthoDB" id="6241467at2759"/>
<dbReference type="PAN-GO" id="Q9NQ33">
    <property type="GO annotations" value="4 GO annotations based on evolutionary models"/>
</dbReference>
<dbReference type="PhylomeDB" id="Q9NQ33"/>
<dbReference type="TreeFam" id="TF322889"/>
<dbReference type="PathwayCommons" id="Q9NQ33"/>
<dbReference type="SignaLink" id="Q9NQ33"/>
<dbReference type="BioGRID-ORCS" id="56676">
    <property type="hits" value="11 hits in 1163 CRISPR screens"/>
</dbReference>
<dbReference type="GenomeRNAi" id="56676"/>
<dbReference type="Pharos" id="Q9NQ33">
    <property type="development level" value="Tbio"/>
</dbReference>
<dbReference type="PRO" id="PR:Q9NQ33"/>
<dbReference type="Proteomes" id="UP000005640">
    <property type="component" value="Chromosome 11"/>
</dbReference>
<dbReference type="RNAct" id="Q9NQ33">
    <property type="molecule type" value="protein"/>
</dbReference>
<dbReference type="Bgee" id="ENSG00000176009">
    <property type="expression patterns" value="Expressed in olfactory segment of nasal mucosa and 38 other cell types or tissues"/>
</dbReference>
<dbReference type="GO" id="GO:0000785">
    <property type="term" value="C:chromatin"/>
    <property type="evidence" value="ECO:0000247"/>
    <property type="project" value="NTNU_SB"/>
</dbReference>
<dbReference type="GO" id="GO:0090575">
    <property type="term" value="C:RNA polymerase II transcription regulator complex"/>
    <property type="evidence" value="ECO:0000318"/>
    <property type="project" value="GO_Central"/>
</dbReference>
<dbReference type="GO" id="GO:0003677">
    <property type="term" value="F:DNA binding"/>
    <property type="evidence" value="ECO:0000250"/>
    <property type="project" value="UniProtKB"/>
</dbReference>
<dbReference type="GO" id="GO:0000981">
    <property type="term" value="F:DNA-binding transcription factor activity, RNA polymerase II-specific"/>
    <property type="evidence" value="ECO:0000247"/>
    <property type="project" value="NTNU_SB"/>
</dbReference>
<dbReference type="GO" id="GO:0001227">
    <property type="term" value="F:DNA-binding transcription repressor activity, RNA polymerase II-specific"/>
    <property type="evidence" value="ECO:0007669"/>
    <property type="project" value="Ensembl"/>
</dbReference>
<dbReference type="GO" id="GO:0046983">
    <property type="term" value="F:protein dimerization activity"/>
    <property type="evidence" value="ECO:0007669"/>
    <property type="project" value="InterPro"/>
</dbReference>
<dbReference type="GO" id="GO:0000977">
    <property type="term" value="F:RNA polymerase II transcription regulatory region sequence-specific DNA binding"/>
    <property type="evidence" value="ECO:0000318"/>
    <property type="project" value="GO_Central"/>
</dbReference>
<dbReference type="GO" id="GO:0045944">
    <property type="term" value="P:positive regulation of transcription by RNA polymerase II"/>
    <property type="evidence" value="ECO:0000318"/>
    <property type="project" value="GO_Central"/>
</dbReference>
<dbReference type="GO" id="GO:0006357">
    <property type="term" value="P:regulation of transcription by RNA polymerase II"/>
    <property type="evidence" value="ECO:0000250"/>
    <property type="project" value="UniProtKB"/>
</dbReference>
<dbReference type="GO" id="GO:0007431">
    <property type="term" value="P:salivary gland development"/>
    <property type="evidence" value="ECO:0007669"/>
    <property type="project" value="Ensembl"/>
</dbReference>
<dbReference type="GO" id="GO:0070654">
    <property type="term" value="P:sensory epithelium regeneration"/>
    <property type="evidence" value="ECO:0007669"/>
    <property type="project" value="Ensembl"/>
</dbReference>
<dbReference type="GO" id="GO:0001894">
    <property type="term" value="P:tissue homeostasis"/>
    <property type="evidence" value="ECO:0007669"/>
    <property type="project" value="Ensembl"/>
</dbReference>
<dbReference type="CDD" id="cd19745">
    <property type="entry name" value="bHLH_TS_ASCL3"/>
    <property type="match status" value="1"/>
</dbReference>
<dbReference type="FunFam" id="4.10.280.10:FF:000038">
    <property type="entry name" value="achaete-scute homolog 3"/>
    <property type="match status" value="1"/>
</dbReference>
<dbReference type="Gene3D" id="4.10.280.10">
    <property type="entry name" value="Helix-loop-helix DNA-binding domain"/>
    <property type="match status" value="1"/>
</dbReference>
<dbReference type="InterPro" id="IPR011598">
    <property type="entry name" value="bHLH_dom"/>
</dbReference>
<dbReference type="InterPro" id="IPR050283">
    <property type="entry name" value="E-box_TF_Regulators"/>
</dbReference>
<dbReference type="InterPro" id="IPR036638">
    <property type="entry name" value="HLH_DNA-bd_sf"/>
</dbReference>
<dbReference type="PANTHER" id="PTHR23349">
    <property type="entry name" value="BASIC HELIX-LOOP-HELIX TRANSCRIPTION FACTOR, TWIST"/>
    <property type="match status" value="1"/>
</dbReference>
<dbReference type="PANTHER" id="PTHR23349:SF108">
    <property type="entry name" value="BHLH DOMAIN-CONTAINING PROTEIN"/>
    <property type="match status" value="1"/>
</dbReference>
<dbReference type="Pfam" id="PF00010">
    <property type="entry name" value="HLH"/>
    <property type="match status" value="1"/>
</dbReference>
<dbReference type="SMART" id="SM00353">
    <property type="entry name" value="HLH"/>
    <property type="match status" value="1"/>
</dbReference>
<dbReference type="SUPFAM" id="SSF47459">
    <property type="entry name" value="HLH, helix-loop-helix DNA-binding domain"/>
    <property type="match status" value="1"/>
</dbReference>
<dbReference type="PROSITE" id="PS50888">
    <property type="entry name" value="BHLH"/>
    <property type="match status" value="1"/>
</dbReference>
<comment type="function">
    <text evidence="1">Transcriptional repressor. Inhibits myogenesis. Plays a role in progenitor cells which differentiate into ductal and acinar, but not myoepithelial, cell lineages in the salivary glands. Involved in the functions of the microvillar cells and Bowman's glands and probably, in a non-cell-autonomous manner, in the development or regeneration of a complete olfactory epithelium (OE).</text>
</comment>
<comment type="subunit">
    <text evidence="1">Efficient DNA binding requires dimerization with another bHLH protein.</text>
</comment>
<comment type="interaction">
    <interactant intactId="EBI-12108222">
        <id>Q9NQ33</id>
    </interactant>
    <interactant intactId="EBI-10329202">
        <id>Q9Y5R4</id>
        <label>HEMK1</label>
    </interactant>
    <organismsDiffer>false</organismsDiffer>
    <experiments>3</experiments>
</comment>
<comment type="interaction">
    <interactant intactId="EBI-12108222">
        <id>Q9NQ33</id>
    </interactant>
    <interactant intactId="EBI-1215527">
        <id>P41134</id>
        <label>ID1</label>
    </interactant>
    <organismsDiffer>false</organismsDiffer>
    <experiments>3</experiments>
</comment>
<comment type="interaction">
    <interactant intactId="EBI-12108222">
        <id>Q9NQ33</id>
    </interactant>
    <interactant intactId="EBI-11952764">
        <id>Q99081-3</id>
        <label>TCF12</label>
    </interactant>
    <organismsDiffer>false</organismsDiffer>
    <experiments>3</experiments>
</comment>
<comment type="interaction">
    <interactant intactId="EBI-12108222">
        <id>Q9NQ33</id>
    </interactant>
    <interactant intactId="EBI-12000326">
        <id>P15923-3</id>
        <label>TCF3</label>
    </interactant>
    <organismsDiffer>false</organismsDiffer>
    <experiments>3</experiments>
</comment>
<comment type="interaction">
    <interactant intactId="EBI-12108222">
        <id>Q9NQ33</id>
    </interactant>
    <interactant intactId="EBI-13636688">
        <id>P15884-3</id>
        <label>TCF4</label>
    </interactant>
    <organismsDiffer>false</organismsDiffer>
    <experiments>3</experiments>
</comment>
<comment type="interaction">
    <interactant intactId="EBI-12108222">
        <id>Q9NQ33</id>
    </interactant>
    <interactant intactId="EBI-2559305">
        <id>A5D8V6</id>
        <label>VPS37C</label>
    </interactant>
    <organismsDiffer>false</organismsDiffer>
    <experiments>3</experiments>
</comment>
<comment type="subcellular location">
    <subcellularLocation>
        <location>Nucleus</location>
    </subcellularLocation>
</comment>
<comment type="tissue specificity">
    <text evidence="4">Widely expressed in fetal and adult tissues.</text>
</comment>
<name>ASCL3_HUMAN</name>